<comment type="catalytic activity">
    <reaction evidence="1">
        <text>1-(2-carboxyphenylamino)-1-deoxy-D-ribulose 5-phosphate + H(+) = (1S,2R)-1-C-(indol-3-yl)glycerol 3-phosphate + CO2 + H2O</text>
        <dbReference type="Rhea" id="RHEA:23476"/>
        <dbReference type="ChEBI" id="CHEBI:15377"/>
        <dbReference type="ChEBI" id="CHEBI:15378"/>
        <dbReference type="ChEBI" id="CHEBI:16526"/>
        <dbReference type="ChEBI" id="CHEBI:58613"/>
        <dbReference type="ChEBI" id="CHEBI:58866"/>
        <dbReference type="EC" id="4.1.1.48"/>
    </reaction>
</comment>
<comment type="pathway">
    <text evidence="1">Amino-acid biosynthesis; L-tryptophan biosynthesis; L-tryptophan from chorismate: step 4/5.</text>
</comment>
<comment type="similarity">
    <text evidence="1">Belongs to the TrpC family.</text>
</comment>
<name>TRPC_JANMA</name>
<evidence type="ECO:0000255" key="1">
    <source>
        <dbReference type="HAMAP-Rule" id="MF_00134"/>
    </source>
</evidence>
<reference key="1">
    <citation type="journal article" date="2007" name="PLoS Genet.">
        <title>Genome analysis of Minibacterium massiliensis highlights the convergent evolution of water-living bacteria.</title>
        <authorList>
            <person name="Audic S."/>
            <person name="Robert C."/>
            <person name="Campagna B."/>
            <person name="Parinello H."/>
            <person name="Claverie J.-M."/>
            <person name="Raoult D."/>
            <person name="Drancourt M."/>
        </authorList>
    </citation>
    <scope>NUCLEOTIDE SEQUENCE [LARGE SCALE GENOMIC DNA]</scope>
    <source>
        <strain>Marseille</strain>
    </source>
</reference>
<dbReference type="EC" id="4.1.1.48" evidence="1"/>
<dbReference type="EMBL" id="CP000269">
    <property type="protein sequence ID" value="ABR88848.1"/>
    <property type="molecule type" value="Genomic_DNA"/>
</dbReference>
<dbReference type="RefSeq" id="WP_011979458.1">
    <property type="nucleotide sequence ID" value="NC_009659.1"/>
</dbReference>
<dbReference type="SMR" id="A6SUH5"/>
<dbReference type="STRING" id="375286.mma_0232"/>
<dbReference type="KEGG" id="mms:mma_0232"/>
<dbReference type="eggNOG" id="COG0134">
    <property type="taxonomic scope" value="Bacteria"/>
</dbReference>
<dbReference type="HOGENOM" id="CLU_034247_2_0_4"/>
<dbReference type="OrthoDB" id="9804217at2"/>
<dbReference type="UniPathway" id="UPA00035">
    <property type="reaction ID" value="UER00043"/>
</dbReference>
<dbReference type="Proteomes" id="UP000006388">
    <property type="component" value="Chromosome"/>
</dbReference>
<dbReference type="GO" id="GO:0004425">
    <property type="term" value="F:indole-3-glycerol-phosphate synthase activity"/>
    <property type="evidence" value="ECO:0007669"/>
    <property type="project" value="UniProtKB-UniRule"/>
</dbReference>
<dbReference type="GO" id="GO:0004640">
    <property type="term" value="F:phosphoribosylanthranilate isomerase activity"/>
    <property type="evidence" value="ECO:0007669"/>
    <property type="project" value="TreeGrafter"/>
</dbReference>
<dbReference type="GO" id="GO:0000162">
    <property type="term" value="P:L-tryptophan biosynthetic process"/>
    <property type="evidence" value="ECO:0007669"/>
    <property type="project" value="UniProtKB-UniRule"/>
</dbReference>
<dbReference type="CDD" id="cd00331">
    <property type="entry name" value="IGPS"/>
    <property type="match status" value="1"/>
</dbReference>
<dbReference type="FunFam" id="3.20.20.70:FF:000024">
    <property type="entry name" value="Indole-3-glycerol phosphate synthase"/>
    <property type="match status" value="1"/>
</dbReference>
<dbReference type="Gene3D" id="3.20.20.70">
    <property type="entry name" value="Aldolase class I"/>
    <property type="match status" value="1"/>
</dbReference>
<dbReference type="HAMAP" id="MF_00134_B">
    <property type="entry name" value="IGPS_B"/>
    <property type="match status" value="1"/>
</dbReference>
<dbReference type="InterPro" id="IPR013785">
    <property type="entry name" value="Aldolase_TIM"/>
</dbReference>
<dbReference type="InterPro" id="IPR045186">
    <property type="entry name" value="Indole-3-glycerol_P_synth"/>
</dbReference>
<dbReference type="InterPro" id="IPR013798">
    <property type="entry name" value="Indole-3-glycerol_P_synth_dom"/>
</dbReference>
<dbReference type="InterPro" id="IPR001468">
    <property type="entry name" value="Indole-3-GlycerolPSynthase_CS"/>
</dbReference>
<dbReference type="InterPro" id="IPR011060">
    <property type="entry name" value="RibuloseP-bd_barrel"/>
</dbReference>
<dbReference type="NCBIfam" id="NF001370">
    <property type="entry name" value="PRK00278.1-2"/>
    <property type="match status" value="1"/>
</dbReference>
<dbReference type="NCBIfam" id="NF001373">
    <property type="entry name" value="PRK00278.1-6"/>
    <property type="match status" value="1"/>
</dbReference>
<dbReference type="NCBIfam" id="NF001377">
    <property type="entry name" value="PRK00278.2-4"/>
    <property type="match status" value="1"/>
</dbReference>
<dbReference type="PANTHER" id="PTHR22854:SF2">
    <property type="entry name" value="INDOLE-3-GLYCEROL-PHOSPHATE SYNTHASE"/>
    <property type="match status" value="1"/>
</dbReference>
<dbReference type="PANTHER" id="PTHR22854">
    <property type="entry name" value="TRYPTOPHAN BIOSYNTHESIS PROTEIN"/>
    <property type="match status" value="1"/>
</dbReference>
<dbReference type="Pfam" id="PF00218">
    <property type="entry name" value="IGPS"/>
    <property type="match status" value="1"/>
</dbReference>
<dbReference type="SUPFAM" id="SSF51366">
    <property type="entry name" value="Ribulose-phoshate binding barrel"/>
    <property type="match status" value="1"/>
</dbReference>
<dbReference type="PROSITE" id="PS00614">
    <property type="entry name" value="IGPS"/>
    <property type="match status" value="1"/>
</dbReference>
<accession>A6SUH5</accession>
<proteinExistence type="inferred from homology"/>
<protein>
    <recommendedName>
        <fullName evidence="1">Indole-3-glycerol phosphate synthase</fullName>
        <shortName evidence="1">IGPS</shortName>
        <ecNumber evidence="1">4.1.1.48</ecNumber>
    </recommendedName>
</protein>
<organism>
    <name type="scientific">Janthinobacterium sp. (strain Marseille)</name>
    <name type="common">Minibacterium massiliensis</name>
    <dbReference type="NCBI Taxonomy" id="375286"/>
    <lineage>
        <taxon>Bacteria</taxon>
        <taxon>Pseudomonadati</taxon>
        <taxon>Pseudomonadota</taxon>
        <taxon>Betaproteobacteria</taxon>
        <taxon>Burkholderiales</taxon>
        <taxon>Oxalobacteraceae</taxon>
        <taxon>Janthinobacterium</taxon>
    </lineage>
</organism>
<gene>
    <name evidence="1" type="primary">trpC</name>
    <name type="ordered locus">mma_0232</name>
</gene>
<feature type="chain" id="PRO_1000018486" description="Indole-3-glycerol phosphate synthase">
    <location>
        <begin position="1"/>
        <end position="266"/>
    </location>
</feature>
<sequence length="266" mass="28957">MSDILNKILDVKADEVAAAKKYRSLASLRDEVEGNKEARAAIRGFEASLRAKIAAGQAGIIAEIKKASPSKGVIRPDFHPADIAVSYEKNGAACLSVLTDVQFFQGAPEYLKQARTACALPALRKDFMIDPYQLYEARSWGADCILLIVAALDHGLMAELEACAHELGMNVLVEVHNAEELTAALKLKTSLLGVNNRNLRTFETSLQTTLDLLPRISPDKLVITESAIVTPDDVKKMRDADVHAFLVGEAFMRAPDPGVELGRLFN</sequence>
<keyword id="KW-0028">Amino-acid biosynthesis</keyword>
<keyword id="KW-0057">Aromatic amino acid biosynthesis</keyword>
<keyword id="KW-0210">Decarboxylase</keyword>
<keyword id="KW-0456">Lyase</keyword>
<keyword id="KW-0822">Tryptophan biosynthesis</keyword>